<feature type="transit peptide" description="Mitochondrion" evidence="2">
    <location>
        <begin position="1"/>
        <end position="12"/>
    </location>
</feature>
<feature type="chain" id="PRO_0000367252" description="Mitochondrial genome maintenance protein mgm101 homolog">
    <location>
        <begin position="13"/>
        <end position="377"/>
    </location>
</feature>
<feature type="region of interest" description="Disordered" evidence="3">
    <location>
        <begin position="254"/>
        <end position="320"/>
    </location>
</feature>
<feature type="compositionally biased region" description="Low complexity" evidence="3">
    <location>
        <begin position="255"/>
        <end position="287"/>
    </location>
</feature>
<feature type="compositionally biased region" description="Acidic residues" evidence="3">
    <location>
        <begin position="311"/>
        <end position="320"/>
    </location>
</feature>
<sequence>MKRFISTTSLRVLSNLNKNNNNNNKFNKSIVGVFNREFSSSNEGLNKVNFGENNNSSTTEPTKVLFNDSQFYQEDKYQGISKEPFSKEIVDTLLADLNPDDIEIKPDGLIYLPEIKYRRILNQAFGPGGWALKPFGPPVVEGKTLIRPYALYCLGRYVAESIGEQQYVPNSFISFATATESAKSNALVRCCKDLGIGSSLWDPIFIRQWKSEYATERWCENSKTKERRLFWFLSNRSENQLPYPWKESDFNQVPSNSSYSSSSSSINNNSNSSNNNNNNSDSSSSINQPQQETISYHQDDSSSPSSKITEQQDDSEDIDIDDVVPPQLKKYAGKTWRQLVADPKGLSYLQWASSSFDNAPKIKSQATAILEFINKSQ</sequence>
<evidence type="ECO:0000250" key="1"/>
<evidence type="ECO:0000255" key="2"/>
<evidence type="ECO:0000256" key="3">
    <source>
        <dbReference type="SAM" id="MobiDB-lite"/>
    </source>
</evidence>
<evidence type="ECO:0000305" key="4"/>
<keyword id="KW-0227">DNA damage</keyword>
<keyword id="KW-0234">DNA repair</keyword>
<keyword id="KW-0238">DNA-binding</keyword>
<keyword id="KW-0496">Mitochondrion</keyword>
<keyword id="KW-1135">Mitochondrion nucleoid</keyword>
<keyword id="KW-1185">Reference proteome</keyword>
<keyword id="KW-0809">Transit peptide</keyword>
<reference key="1">
    <citation type="journal article" date="2002" name="Nature">
        <title>Sequence and analysis of chromosome 2 of Dictyostelium discoideum.</title>
        <authorList>
            <person name="Gloeckner G."/>
            <person name="Eichinger L."/>
            <person name="Szafranski K."/>
            <person name="Pachebat J.A."/>
            <person name="Bankier A.T."/>
            <person name="Dear P.H."/>
            <person name="Lehmann R."/>
            <person name="Baumgart C."/>
            <person name="Parra G."/>
            <person name="Abril J.F."/>
            <person name="Guigo R."/>
            <person name="Kumpf K."/>
            <person name="Tunggal B."/>
            <person name="Cox E.C."/>
            <person name="Quail M.A."/>
            <person name="Platzer M."/>
            <person name="Rosenthal A."/>
            <person name="Noegel A.A."/>
        </authorList>
    </citation>
    <scope>NUCLEOTIDE SEQUENCE [LARGE SCALE GENOMIC DNA]</scope>
    <source>
        <strain>AX4</strain>
    </source>
</reference>
<reference key="2">
    <citation type="journal article" date="2005" name="Nature">
        <title>The genome of the social amoeba Dictyostelium discoideum.</title>
        <authorList>
            <person name="Eichinger L."/>
            <person name="Pachebat J.A."/>
            <person name="Gloeckner G."/>
            <person name="Rajandream M.A."/>
            <person name="Sucgang R."/>
            <person name="Berriman M."/>
            <person name="Song J."/>
            <person name="Olsen R."/>
            <person name="Szafranski K."/>
            <person name="Xu Q."/>
            <person name="Tunggal B."/>
            <person name="Kummerfeld S."/>
            <person name="Madera M."/>
            <person name="Konfortov B.A."/>
            <person name="Rivero F."/>
            <person name="Bankier A.T."/>
            <person name="Lehmann R."/>
            <person name="Hamlin N."/>
            <person name="Davies R."/>
            <person name="Gaudet P."/>
            <person name="Fey P."/>
            <person name="Pilcher K."/>
            <person name="Chen G."/>
            <person name="Saunders D."/>
            <person name="Sodergren E.J."/>
            <person name="Davis P."/>
            <person name="Kerhornou A."/>
            <person name="Nie X."/>
            <person name="Hall N."/>
            <person name="Anjard C."/>
            <person name="Hemphill L."/>
            <person name="Bason N."/>
            <person name="Farbrother P."/>
            <person name="Desany B."/>
            <person name="Just E."/>
            <person name="Morio T."/>
            <person name="Rost R."/>
            <person name="Churcher C.M."/>
            <person name="Cooper J."/>
            <person name="Haydock S."/>
            <person name="van Driessche N."/>
            <person name="Cronin A."/>
            <person name="Goodhead I."/>
            <person name="Muzny D.M."/>
            <person name="Mourier T."/>
            <person name="Pain A."/>
            <person name="Lu M."/>
            <person name="Harper D."/>
            <person name="Lindsay R."/>
            <person name="Hauser H."/>
            <person name="James K.D."/>
            <person name="Quiles M."/>
            <person name="Madan Babu M."/>
            <person name="Saito T."/>
            <person name="Buchrieser C."/>
            <person name="Wardroper A."/>
            <person name="Felder M."/>
            <person name="Thangavelu M."/>
            <person name="Johnson D."/>
            <person name="Knights A."/>
            <person name="Loulseged H."/>
            <person name="Mungall K.L."/>
            <person name="Oliver K."/>
            <person name="Price C."/>
            <person name="Quail M.A."/>
            <person name="Urushihara H."/>
            <person name="Hernandez J."/>
            <person name="Rabbinowitsch E."/>
            <person name="Steffen D."/>
            <person name="Sanders M."/>
            <person name="Ma J."/>
            <person name="Kohara Y."/>
            <person name="Sharp S."/>
            <person name="Simmonds M.N."/>
            <person name="Spiegler S."/>
            <person name="Tivey A."/>
            <person name="Sugano S."/>
            <person name="White B."/>
            <person name="Walker D."/>
            <person name="Woodward J.R."/>
            <person name="Winckler T."/>
            <person name="Tanaka Y."/>
            <person name="Shaulsky G."/>
            <person name="Schleicher M."/>
            <person name="Weinstock G.M."/>
            <person name="Rosenthal A."/>
            <person name="Cox E.C."/>
            <person name="Chisholm R.L."/>
            <person name="Gibbs R.A."/>
            <person name="Loomis W.F."/>
            <person name="Platzer M."/>
            <person name="Kay R.R."/>
            <person name="Williams J.G."/>
            <person name="Dear P.H."/>
            <person name="Noegel A.A."/>
            <person name="Barrell B.G."/>
            <person name="Kuspa A."/>
        </authorList>
    </citation>
    <scope>NUCLEOTIDE SEQUENCE [LARGE SCALE GENOMIC DNA]</scope>
    <source>
        <strain>AX4</strain>
    </source>
</reference>
<protein>
    <recommendedName>
        <fullName>Mitochondrial genome maintenance protein mgm101 homolog</fullName>
    </recommendedName>
</protein>
<organism>
    <name type="scientific">Dictyostelium discoideum</name>
    <name type="common">Social amoeba</name>
    <dbReference type="NCBI Taxonomy" id="44689"/>
    <lineage>
        <taxon>Eukaryota</taxon>
        <taxon>Amoebozoa</taxon>
        <taxon>Evosea</taxon>
        <taxon>Eumycetozoa</taxon>
        <taxon>Dictyostelia</taxon>
        <taxon>Dictyosteliales</taxon>
        <taxon>Dictyosteliaceae</taxon>
        <taxon>Dictyostelium</taxon>
    </lineage>
</organism>
<dbReference type="EMBL" id="AAFI02000020">
    <property type="protein sequence ID" value="EAL68688.1"/>
    <property type="molecule type" value="Genomic_DNA"/>
</dbReference>
<dbReference type="RefSeq" id="XP_642651.1">
    <property type="nucleotide sequence ID" value="XM_637559.1"/>
</dbReference>
<dbReference type="BioGRID" id="1246070">
    <property type="interactions" value="1"/>
</dbReference>
<dbReference type="FunCoup" id="Q8MYF0">
    <property type="interactions" value="4"/>
</dbReference>
<dbReference type="STRING" id="44689.Q8MYF0"/>
<dbReference type="PaxDb" id="44689-DDB0304673"/>
<dbReference type="EnsemblProtists" id="EAL68688">
    <property type="protein sequence ID" value="EAL68688"/>
    <property type="gene ID" value="DDB_G0277451"/>
</dbReference>
<dbReference type="GeneID" id="8621067"/>
<dbReference type="KEGG" id="ddi:DDB_G0277451"/>
<dbReference type="dictyBase" id="DDB_G0277451">
    <property type="gene designation" value="mgm101"/>
</dbReference>
<dbReference type="VEuPathDB" id="AmoebaDB:DDB_G0277451"/>
<dbReference type="eggNOG" id="ENOG502RXU4">
    <property type="taxonomic scope" value="Eukaryota"/>
</dbReference>
<dbReference type="HOGENOM" id="CLU_734520_0_0_1"/>
<dbReference type="InParanoid" id="Q8MYF0"/>
<dbReference type="OMA" id="RPYALYC"/>
<dbReference type="PRO" id="PR:Q8MYF0"/>
<dbReference type="Proteomes" id="UP000002195">
    <property type="component" value="Chromosome 2"/>
</dbReference>
<dbReference type="GO" id="GO:0000262">
    <property type="term" value="C:mitochondrial chromosome"/>
    <property type="evidence" value="ECO:0007669"/>
    <property type="project" value="InterPro"/>
</dbReference>
<dbReference type="GO" id="GO:0042645">
    <property type="term" value="C:mitochondrial nucleoid"/>
    <property type="evidence" value="ECO:0000318"/>
    <property type="project" value="GO_Central"/>
</dbReference>
<dbReference type="GO" id="GO:0005739">
    <property type="term" value="C:mitochondrion"/>
    <property type="evidence" value="ECO:0000250"/>
    <property type="project" value="dictyBase"/>
</dbReference>
<dbReference type="GO" id="GO:0003677">
    <property type="term" value="F:DNA binding"/>
    <property type="evidence" value="ECO:0000250"/>
    <property type="project" value="dictyBase"/>
</dbReference>
<dbReference type="GO" id="GO:0003697">
    <property type="term" value="F:single-stranded DNA binding"/>
    <property type="evidence" value="ECO:0007669"/>
    <property type="project" value="InterPro"/>
</dbReference>
<dbReference type="GO" id="GO:0036297">
    <property type="term" value="P:interstrand cross-link repair"/>
    <property type="evidence" value="ECO:0000318"/>
    <property type="project" value="GO_Central"/>
</dbReference>
<dbReference type="GO" id="GO:0000002">
    <property type="term" value="P:mitochondrial genome maintenance"/>
    <property type="evidence" value="ECO:0000250"/>
    <property type="project" value="dictyBase"/>
</dbReference>
<dbReference type="GO" id="GO:0000725">
    <property type="term" value="P:recombinational repair"/>
    <property type="evidence" value="ECO:0000318"/>
    <property type="project" value="GO_Central"/>
</dbReference>
<dbReference type="InterPro" id="IPR009446">
    <property type="entry name" value="Mgm101"/>
</dbReference>
<dbReference type="PANTHER" id="PTHR31404">
    <property type="entry name" value="MITOCHONDRIAL GENOME MAINTENANCE PROTEIN MGM101"/>
    <property type="match status" value="1"/>
</dbReference>
<dbReference type="PANTHER" id="PTHR31404:SF0">
    <property type="entry name" value="MITOCHONDRIAL GENOME MAINTENANCE PROTEIN MGM101"/>
    <property type="match status" value="1"/>
</dbReference>
<dbReference type="Pfam" id="PF06420">
    <property type="entry name" value="Mgm101p"/>
    <property type="match status" value="1"/>
</dbReference>
<proteinExistence type="inferred from homology"/>
<accession>Q8MYF0</accession>
<accession>Q54ZJ1</accession>
<name>MG101_DICDI</name>
<gene>
    <name type="primary">mgm101</name>
    <name type="ORF">DDB_G0277451</name>
</gene>
<comment type="function">
    <text evidence="1">Performs an essential function in the repair of oxidatively damaged mtDNA that is required for the maintenance of the mitochondrial genome. Binds to DNA (By similarity).</text>
</comment>
<comment type="subcellular location">
    <subcellularLocation>
        <location evidence="1">Mitochondrion matrix</location>
        <location evidence="1">Mitochondrion nucleoid</location>
    </subcellularLocation>
</comment>
<comment type="similarity">
    <text evidence="4">Belongs to the MGM101 family.</text>
</comment>